<reference key="1">
    <citation type="journal article" date="1995" name="Mol. Microbiol.">
        <title>The dnaK operon of Streptomyces coelicolor encodes a novel heat-shock protein which binds to the promoter region of the operon.</title>
        <authorList>
            <person name="Bucca G."/>
            <person name="Ferina G."/>
            <person name="Puglia A.M."/>
            <person name="Smith C.P."/>
        </authorList>
    </citation>
    <scope>NUCLEOTIDE SEQUENCE [GENOMIC DNA]</scope>
    <source>
        <strain>A3(2) / NRRL B-16638</strain>
    </source>
</reference>
<reference key="2">
    <citation type="journal article" date="2002" name="Nature">
        <title>Complete genome sequence of the model actinomycete Streptomyces coelicolor A3(2).</title>
        <authorList>
            <person name="Bentley S.D."/>
            <person name="Chater K.F."/>
            <person name="Cerdeno-Tarraga A.-M."/>
            <person name="Challis G.L."/>
            <person name="Thomson N.R."/>
            <person name="James K.D."/>
            <person name="Harris D.E."/>
            <person name="Quail M.A."/>
            <person name="Kieser H."/>
            <person name="Harper D."/>
            <person name="Bateman A."/>
            <person name="Brown S."/>
            <person name="Chandra G."/>
            <person name="Chen C.W."/>
            <person name="Collins M."/>
            <person name="Cronin A."/>
            <person name="Fraser A."/>
            <person name="Goble A."/>
            <person name="Hidalgo J."/>
            <person name="Hornsby T."/>
            <person name="Howarth S."/>
            <person name="Huang C.-H."/>
            <person name="Kieser T."/>
            <person name="Larke L."/>
            <person name="Murphy L.D."/>
            <person name="Oliver K."/>
            <person name="O'Neil S."/>
            <person name="Rabbinowitsch E."/>
            <person name="Rajandream M.A."/>
            <person name="Rutherford K.M."/>
            <person name="Rutter S."/>
            <person name="Seeger K."/>
            <person name="Saunders D."/>
            <person name="Sharp S."/>
            <person name="Squares R."/>
            <person name="Squares S."/>
            <person name="Taylor K."/>
            <person name="Warren T."/>
            <person name="Wietzorrek A."/>
            <person name="Woodward J.R."/>
            <person name="Barrell B.G."/>
            <person name="Parkhill J."/>
            <person name="Hopwood D.A."/>
        </authorList>
    </citation>
    <scope>NUCLEOTIDE SEQUENCE [LARGE SCALE GENOMIC DNA]</scope>
    <source>
        <strain>ATCC BAA-471 / A3(2) / M145</strain>
    </source>
</reference>
<reference key="3">
    <citation type="journal article" date="1996" name="DNA Seq.">
        <title>Cloning and sequencing of the dnaK locus in Streptomyces coelicolor A3(2).</title>
        <authorList>
            <person name="Brans A."/>
            <person name="Loriaux A."/>
            <person name="Joris B."/>
            <person name="Dusart J."/>
        </authorList>
    </citation>
    <scope>NUCLEOTIDE SEQUENCE [GENOMIC DNA] OF 1-387</scope>
    <source>
        <strain>A3(2) / NRRL B-16638</strain>
    </source>
</reference>
<protein>
    <recommendedName>
        <fullName evidence="1">Chaperone protein DnaJ 1</fullName>
    </recommendedName>
</protein>
<organism>
    <name type="scientific">Streptomyces coelicolor (strain ATCC BAA-471 / A3(2) / M145)</name>
    <dbReference type="NCBI Taxonomy" id="100226"/>
    <lineage>
        <taxon>Bacteria</taxon>
        <taxon>Bacillati</taxon>
        <taxon>Actinomycetota</taxon>
        <taxon>Actinomycetes</taxon>
        <taxon>Kitasatosporales</taxon>
        <taxon>Streptomycetaceae</taxon>
        <taxon>Streptomyces</taxon>
        <taxon>Streptomyces albidoflavus group</taxon>
    </lineage>
</organism>
<gene>
    <name evidence="1" type="primary">dnaJ1</name>
    <name type="ordered locus">SCO3669</name>
    <name type="ORF">SCH44.09c</name>
</gene>
<evidence type="ECO:0000255" key="1">
    <source>
        <dbReference type="HAMAP-Rule" id="MF_01152"/>
    </source>
</evidence>
<evidence type="ECO:0000305" key="2"/>
<feature type="chain" id="PRO_0000070898" description="Chaperone protein DnaJ 1">
    <location>
        <begin position="1"/>
        <end position="399"/>
    </location>
</feature>
<feature type="domain" description="J" evidence="1">
    <location>
        <begin position="10"/>
        <end position="75"/>
    </location>
</feature>
<feature type="repeat" description="CXXCXGXG motif">
    <location>
        <begin position="179"/>
        <end position="186"/>
    </location>
</feature>
<feature type="repeat" description="CXXCXGXG motif">
    <location>
        <begin position="195"/>
        <end position="202"/>
    </location>
</feature>
<feature type="repeat" description="CXXCXGXG motif">
    <location>
        <begin position="218"/>
        <end position="225"/>
    </location>
</feature>
<feature type="repeat" description="CXXCXGXG motif">
    <location>
        <begin position="232"/>
        <end position="239"/>
    </location>
</feature>
<feature type="zinc finger region" description="CR-type" evidence="1">
    <location>
        <begin position="166"/>
        <end position="244"/>
    </location>
</feature>
<feature type="binding site" evidence="1">
    <location>
        <position position="179"/>
    </location>
    <ligand>
        <name>Zn(2+)</name>
        <dbReference type="ChEBI" id="CHEBI:29105"/>
        <label>1</label>
    </ligand>
</feature>
<feature type="binding site" evidence="1">
    <location>
        <position position="182"/>
    </location>
    <ligand>
        <name>Zn(2+)</name>
        <dbReference type="ChEBI" id="CHEBI:29105"/>
        <label>1</label>
    </ligand>
</feature>
<feature type="binding site" evidence="1">
    <location>
        <position position="195"/>
    </location>
    <ligand>
        <name>Zn(2+)</name>
        <dbReference type="ChEBI" id="CHEBI:29105"/>
        <label>2</label>
    </ligand>
</feature>
<feature type="binding site" evidence="1">
    <location>
        <position position="198"/>
    </location>
    <ligand>
        <name>Zn(2+)</name>
        <dbReference type="ChEBI" id="CHEBI:29105"/>
        <label>2</label>
    </ligand>
</feature>
<feature type="binding site" evidence="1">
    <location>
        <position position="218"/>
    </location>
    <ligand>
        <name>Zn(2+)</name>
        <dbReference type="ChEBI" id="CHEBI:29105"/>
        <label>2</label>
    </ligand>
</feature>
<feature type="binding site" evidence="1">
    <location>
        <position position="221"/>
    </location>
    <ligand>
        <name>Zn(2+)</name>
        <dbReference type="ChEBI" id="CHEBI:29105"/>
        <label>2</label>
    </ligand>
</feature>
<feature type="binding site" evidence="1">
    <location>
        <position position="232"/>
    </location>
    <ligand>
        <name>Zn(2+)</name>
        <dbReference type="ChEBI" id="CHEBI:29105"/>
        <label>1</label>
    </ligand>
</feature>
<feature type="binding site" evidence="1">
    <location>
        <position position="235"/>
    </location>
    <ligand>
        <name>Zn(2+)</name>
        <dbReference type="ChEBI" id="CHEBI:29105"/>
        <label>1</label>
    </ligand>
</feature>
<feature type="sequence conflict" description="In Ref. 1; AAB29453." evidence="2" ref="1">
    <original>D</original>
    <variation>H</variation>
    <location>
        <position position="278"/>
    </location>
</feature>
<dbReference type="EMBL" id="L46700">
    <property type="protein sequence ID" value="AAB29453.1"/>
    <property type="molecule type" value="Genomic_DNA"/>
</dbReference>
<dbReference type="EMBL" id="AL939117">
    <property type="protein sequence ID" value="CAB91160.1"/>
    <property type="molecule type" value="Genomic_DNA"/>
</dbReference>
<dbReference type="EMBL" id="X77458">
    <property type="protein sequence ID" value="CAA54608.1"/>
    <property type="molecule type" value="Genomic_DNA"/>
</dbReference>
<dbReference type="PIR" id="S41948">
    <property type="entry name" value="S41948"/>
</dbReference>
<dbReference type="PIR" id="S70206">
    <property type="entry name" value="S70206"/>
</dbReference>
<dbReference type="RefSeq" id="NP_627862.1">
    <property type="nucleotide sequence ID" value="NC_003888.3"/>
</dbReference>
<dbReference type="SMR" id="P40170"/>
<dbReference type="FunCoup" id="P40170">
    <property type="interactions" value="6"/>
</dbReference>
<dbReference type="STRING" id="100226.gene:17761292"/>
<dbReference type="PaxDb" id="100226-SCO3669"/>
<dbReference type="KEGG" id="sco:SCO3669"/>
<dbReference type="PATRIC" id="fig|100226.15.peg.3727"/>
<dbReference type="eggNOG" id="COG0484">
    <property type="taxonomic scope" value="Bacteria"/>
</dbReference>
<dbReference type="HOGENOM" id="CLU_017633_0_6_11"/>
<dbReference type="InParanoid" id="P40170"/>
<dbReference type="OrthoDB" id="9779889at2"/>
<dbReference type="PhylomeDB" id="P40170"/>
<dbReference type="Proteomes" id="UP000001973">
    <property type="component" value="Chromosome"/>
</dbReference>
<dbReference type="GO" id="GO:0005737">
    <property type="term" value="C:cytoplasm"/>
    <property type="evidence" value="ECO:0000318"/>
    <property type="project" value="GO_Central"/>
</dbReference>
<dbReference type="GO" id="GO:0005524">
    <property type="term" value="F:ATP binding"/>
    <property type="evidence" value="ECO:0007669"/>
    <property type="project" value="InterPro"/>
</dbReference>
<dbReference type="GO" id="GO:0031072">
    <property type="term" value="F:heat shock protein binding"/>
    <property type="evidence" value="ECO:0007669"/>
    <property type="project" value="InterPro"/>
</dbReference>
<dbReference type="GO" id="GO:0051082">
    <property type="term" value="F:unfolded protein binding"/>
    <property type="evidence" value="ECO:0000318"/>
    <property type="project" value="GO_Central"/>
</dbReference>
<dbReference type="GO" id="GO:0008270">
    <property type="term" value="F:zinc ion binding"/>
    <property type="evidence" value="ECO:0007669"/>
    <property type="project" value="UniProtKB-UniRule"/>
</dbReference>
<dbReference type="GO" id="GO:0051085">
    <property type="term" value="P:chaperone cofactor-dependent protein refolding"/>
    <property type="evidence" value="ECO:0000318"/>
    <property type="project" value="GO_Central"/>
</dbReference>
<dbReference type="GO" id="GO:0006260">
    <property type="term" value="P:DNA replication"/>
    <property type="evidence" value="ECO:0007669"/>
    <property type="project" value="UniProtKB-KW"/>
</dbReference>
<dbReference type="GO" id="GO:0042026">
    <property type="term" value="P:protein refolding"/>
    <property type="evidence" value="ECO:0000318"/>
    <property type="project" value="GO_Central"/>
</dbReference>
<dbReference type="GO" id="GO:0009408">
    <property type="term" value="P:response to heat"/>
    <property type="evidence" value="ECO:0007669"/>
    <property type="project" value="InterPro"/>
</dbReference>
<dbReference type="CDD" id="cd06257">
    <property type="entry name" value="DnaJ"/>
    <property type="match status" value="1"/>
</dbReference>
<dbReference type="CDD" id="cd10747">
    <property type="entry name" value="DnaJ_C"/>
    <property type="match status" value="1"/>
</dbReference>
<dbReference type="CDD" id="cd10719">
    <property type="entry name" value="DnaJ_zf"/>
    <property type="match status" value="1"/>
</dbReference>
<dbReference type="FunFam" id="2.60.260.20:FF:000005">
    <property type="entry name" value="Chaperone protein dnaJ 1, mitochondrial"/>
    <property type="match status" value="1"/>
</dbReference>
<dbReference type="FunFam" id="1.10.287.110:FF:000045">
    <property type="entry name" value="Molecular chaperone DnaJ"/>
    <property type="match status" value="1"/>
</dbReference>
<dbReference type="FunFam" id="2.10.230.10:FF:000002">
    <property type="entry name" value="Molecular chaperone DnaJ"/>
    <property type="match status" value="1"/>
</dbReference>
<dbReference type="Gene3D" id="6.20.20.10">
    <property type="match status" value="2"/>
</dbReference>
<dbReference type="Gene3D" id="1.10.287.110">
    <property type="entry name" value="DnaJ domain"/>
    <property type="match status" value="1"/>
</dbReference>
<dbReference type="Gene3D" id="2.60.260.20">
    <property type="entry name" value="Urease metallochaperone UreE, N-terminal domain"/>
    <property type="match status" value="2"/>
</dbReference>
<dbReference type="HAMAP" id="MF_01152">
    <property type="entry name" value="DnaJ"/>
    <property type="match status" value="1"/>
</dbReference>
<dbReference type="InterPro" id="IPR012724">
    <property type="entry name" value="DnaJ"/>
</dbReference>
<dbReference type="InterPro" id="IPR002939">
    <property type="entry name" value="DnaJ_C"/>
</dbReference>
<dbReference type="InterPro" id="IPR001623">
    <property type="entry name" value="DnaJ_domain"/>
</dbReference>
<dbReference type="InterPro" id="IPR018253">
    <property type="entry name" value="DnaJ_domain_CS"/>
</dbReference>
<dbReference type="InterPro" id="IPR008971">
    <property type="entry name" value="HSP40/DnaJ_pept-bd"/>
</dbReference>
<dbReference type="InterPro" id="IPR001305">
    <property type="entry name" value="HSP_DnaJ_Cys-rich_dom"/>
</dbReference>
<dbReference type="InterPro" id="IPR036410">
    <property type="entry name" value="HSP_DnaJ_Cys-rich_dom_sf"/>
</dbReference>
<dbReference type="InterPro" id="IPR036869">
    <property type="entry name" value="J_dom_sf"/>
</dbReference>
<dbReference type="NCBIfam" id="TIGR02349">
    <property type="entry name" value="DnaJ_bact"/>
    <property type="match status" value="1"/>
</dbReference>
<dbReference type="NCBIfam" id="NF010888">
    <property type="entry name" value="PRK14295.1"/>
    <property type="match status" value="1"/>
</dbReference>
<dbReference type="PANTHER" id="PTHR43096:SF54">
    <property type="entry name" value="CHAPERONE PROTEIN DNAJ 1"/>
    <property type="match status" value="1"/>
</dbReference>
<dbReference type="PANTHER" id="PTHR43096">
    <property type="entry name" value="DNAJ HOMOLOG 1, MITOCHONDRIAL-RELATED"/>
    <property type="match status" value="1"/>
</dbReference>
<dbReference type="Pfam" id="PF00226">
    <property type="entry name" value="DnaJ"/>
    <property type="match status" value="1"/>
</dbReference>
<dbReference type="Pfam" id="PF01556">
    <property type="entry name" value="DnaJ_C"/>
    <property type="match status" value="1"/>
</dbReference>
<dbReference type="Pfam" id="PF00684">
    <property type="entry name" value="DnaJ_CXXCXGXG"/>
    <property type="match status" value="1"/>
</dbReference>
<dbReference type="PRINTS" id="PR00625">
    <property type="entry name" value="JDOMAIN"/>
</dbReference>
<dbReference type="SMART" id="SM00271">
    <property type="entry name" value="DnaJ"/>
    <property type="match status" value="1"/>
</dbReference>
<dbReference type="SUPFAM" id="SSF46565">
    <property type="entry name" value="Chaperone J-domain"/>
    <property type="match status" value="1"/>
</dbReference>
<dbReference type="SUPFAM" id="SSF57938">
    <property type="entry name" value="DnaJ/Hsp40 cysteine-rich domain"/>
    <property type="match status" value="1"/>
</dbReference>
<dbReference type="SUPFAM" id="SSF49493">
    <property type="entry name" value="HSP40/DnaJ peptide-binding domain"/>
    <property type="match status" value="2"/>
</dbReference>
<dbReference type="PROSITE" id="PS00636">
    <property type="entry name" value="DNAJ_1"/>
    <property type="match status" value="1"/>
</dbReference>
<dbReference type="PROSITE" id="PS50076">
    <property type="entry name" value="DNAJ_2"/>
    <property type="match status" value="1"/>
</dbReference>
<dbReference type="PROSITE" id="PS51188">
    <property type="entry name" value="ZF_CR"/>
    <property type="match status" value="1"/>
</dbReference>
<proteinExistence type="inferred from homology"/>
<accession>P40170</accession>
<sequence length="399" mass="41337">MSTKDFIEKDYYKVLGVPKDATEAEIKKAYRKLARENHPDANKGNVKAEERFKEISEANDILGDPKKRKEYDEARALFGNGGFRPGPGAGGGGTFNFDLGDLFGGGAQGGGGQGGAGGFGGGLGDVFGGLFNRTGGGPGTGTRTQPRRGQDIESEVTLSFTEAIEGATVPLRMSSQAPCKACSGTGDKNGTPRVCPTCVGTGQVARGSGGGFSLTDPCPDCKGRGLIAEDPCEVCKGSGRAKSSRTMQVRIPAGVSDGQRIRLRGKGTPGERGGPAGDLYVVVHVKEHPVFGRRGDNLTVTVPVTYAEAALGGEVRVPTLGGPSVTLKLPAGTPNGRTMRARGKGAVRKDGTRGDLLVTVEVSVPKDLTGKARDALQAYREATADEDPRAELFQAAKGA</sequence>
<name>DNAJ1_STRCO</name>
<comment type="function">
    <text evidence="1">Participates actively in the response to hyperosmotic and heat shock by preventing the aggregation of stress-denatured proteins and by disaggregating proteins, also in an autonomous, DnaK-independent fashion. Unfolded proteins bind initially to DnaJ; upon interaction with the DnaJ-bound protein, DnaK hydrolyzes its bound ATP, resulting in the formation of a stable complex. GrpE releases ADP from DnaK; ATP binding to DnaK triggers the release of the substrate protein, thus completing the reaction cycle. Several rounds of ATP-dependent interactions between DnaJ, DnaK and GrpE are required for fully efficient folding. Also involved, together with DnaK and GrpE, in the DNA replication of plasmids through activation of initiation proteins.</text>
</comment>
<comment type="cofactor">
    <cofactor evidence="1">
        <name>Zn(2+)</name>
        <dbReference type="ChEBI" id="CHEBI:29105"/>
    </cofactor>
    <text evidence="1">Binds 2 Zn(2+) ions per monomer.</text>
</comment>
<comment type="subunit">
    <text evidence="1">Homodimer.</text>
</comment>
<comment type="subcellular location">
    <subcellularLocation>
        <location evidence="1">Cytoplasm</location>
    </subcellularLocation>
</comment>
<comment type="domain">
    <text evidence="1">The J domain is necessary and sufficient to stimulate DnaK ATPase activity. Zinc center 1 plays an important role in the autonomous, DnaK-independent chaperone activity of DnaJ. Zinc center 2 is essential for interaction with DnaK and for DnaJ activity.</text>
</comment>
<comment type="similarity">
    <text evidence="1">Belongs to the DnaJ family.</text>
</comment>
<keyword id="KW-0143">Chaperone</keyword>
<keyword id="KW-0963">Cytoplasm</keyword>
<keyword id="KW-0235">DNA replication</keyword>
<keyword id="KW-0479">Metal-binding</keyword>
<keyword id="KW-1185">Reference proteome</keyword>
<keyword id="KW-0677">Repeat</keyword>
<keyword id="KW-0346">Stress response</keyword>
<keyword id="KW-0862">Zinc</keyword>
<keyword id="KW-0863">Zinc-finger</keyword>